<accession>O34727</accession>
<evidence type="ECO:0000250" key="1"/>
<evidence type="ECO:0000255" key="2"/>
<evidence type="ECO:0000305" key="3"/>
<proteinExistence type="inferred from homology"/>
<protein>
    <recommendedName>
        <fullName>Imidazole glycerol phosphate synthase subunit HisF</fullName>
        <ecNumber>4.3.2.10</ecNumber>
    </recommendedName>
    <alternativeName>
        <fullName>IGP synthase cyclase subunit</fullName>
    </alternativeName>
    <alternativeName>
        <fullName>IGP synthase subunit HisF</fullName>
    </alternativeName>
    <alternativeName>
        <fullName>ImGP synthase subunit HisF</fullName>
        <shortName>IGPS subunit HisF</shortName>
    </alternativeName>
</protein>
<name>HIS6_BACSU</name>
<keyword id="KW-0028">Amino-acid biosynthesis</keyword>
<keyword id="KW-0963">Cytoplasm</keyword>
<keyword id="KW-0368">Histidine biosynthesis</keyword>
<keyword id="KW-0456">Lyase</keyword>
<keyword id="KW-1185">Reference proteome</keyword>
<feature type="chain" id="PRO_0000142118" description="Imidazole glycerol phosphate synthase subunit HisF">
    <location>
        <begin position="1"/>
        <end position="252"/>
    </location>
</feature>
<feature type="active site" evidence="2">
    <location>
        <position position="11"/>
    </location>
</feature>
<feature type="active site" evidence="2">
    <location>
        <position position="130"/>
    </location>
</feature>
<comment type="function">
    <text evidence="1">IGPS catalyzes the conversion of PRFAR and glutamine to IGP, AICAR and glutamate. The HisF subunit catalyzes the cyclization activity that produces IGP and AICAR from PRFAR using the ammonia provided by the HisH subunit (By similarity).</text>
</comment>
<comment type="catalytic activity">
    <reaction>
        <text>5-[(5-phospho-1-deoxy-D-ribulos-1-ylimino)methylamino]-1-(5-phospho-beta-D-ribosyl)imidazole-4-carboxamide + L-glutamine = D-erythro-1-(imidazol-4-yl)glycerol 3-phosphate + 5-amino-1-(5-phospho-beta-D-ribosyl)imidazole-4-carboxamide + L-glutamate + H(+)</text>
        <dbReference type="Rhea" id="RHEA:24793"/>
        <dbReference type="ChEBI" id="CHEBI:15378"/>
        <dbReference type="ChEBI" id="CHEBI:29985"/>
        <dbReference type="ChEBI" id="CHEBI:58278"/>
        <dbReference type="ChEBI" id="CHEBI:58359"/>
        <dbReference type="ChEBI" id="CHEBI:58475"/>
        <dbReference type="ChEBI" id="CHEBI:58525"/>
        <dbReference type="EC" id="4.3.2.10"/>
    </reaction>
</comment>
<comment type="pathway">
    <text>Amino-acid biosynthesis; L-histidine biosynthesis; L-histidine from 5-phospho-alpha-D-ribose 1-diphosphate: step 5/9.</text>
</comment>
<comment type="subunit">
    <text evidence="1">Heterodimer of HisH and HisF.</text>
</comment>
<comment type="subcellular location">
    <subcellularLocation>
        <location evidence="1">Cytoplasm</location>
    </subcellularLocation>
</comment>
<comment type="similarity">
    <text evidence="3">Belongs to the HisA/HisF family.</text>
</comment>
<dbReference type="EC" id="4.3.2.10"/>
<dbReference type="EMBL" id="AF017113">
    <property type="protein sequence ID" value="AAC67299.1"/>
    <property type="molecule type" value="Genomic_DNA"/>
</dbReference>
<dbReference type="EMBL" id="AL009126">
    <property type="protein sequence ID" value="CAB15492.1"/>
    <property type="molecule type" value="Genomic_DNA"/>
</dbReference>
<dbReference type="PIR" id="B69641">
    <property type="entry name" value="B69641"/>
</dbReference>
<dbReference type="RefSeq" id="NP_391367.1">
    <property type="nucleotide sequence ID" value="NC_000964.3"/>
</dbReference>
<dbReference type="RefSeq" id="WP_003244585.1">
    <property type="nucleotide sequence ID" value="NZ_OZ025638.1"/>
</dbReference>
<dbReference type="SMR" id="O34727"/>
<dbReference type="FunCoup" id="O34727">
    <property type="interactions" value="669"/>
</dbReference>
<dbReference type="STRING" id="224308.BSU34870"/>
<dbReference type="PaxDb" id="224308-BSU34870"/>
<dbReference type="EnsemblBacteria" id="CAB15492">
    <property type="protein sequence ID" value="CAB15492"/>
    <property type="gene ID" value="BSU_34870"/>
</dbReference>
<dbReference type="GeneID" id="936554"/>
<dbReference type="KEGG" id="bsu:BSU34870"/>
<dbReference type="PATRIC" id="fig|224308.179.peg.3775"/>
<dbReference type="eggNOG" id="COG0107">
    <property type="taxonomic scope" value="Bacteria"/>
</dbReference>
<dbReference type="InParanoid" id="O34727"/>
<dbReference type="OrthoDB" id="9781903at2"/>
<dbReference type="PhylomeDB" id="O34727"/>
<dbReference type="BioCyc" id="BSUB:BSU34870-MONOMER"/>
<dbReference type="UniPathway" id="UPA00031">
    <property type="reaction ID" value="UER00010"/>
</dbReference>
<dbReference type="Proteomes" id="UP000001570">
    <property type="component" value="Chromosome"/>
</dbReference>
<dbReference type="GO" id="GO:0005737">
    <property type="term" value="C:cytoplasm"/>
    <property type="evidence" value="ECO:0007669"/>
    <property type="project" value="UniProtKB-SubCell"/>
</dbReference>
<dbReference type="GO" id="GO:0000107">
    <property type="term" value="F:imidazoleglycerol-phosphate synthase activity"/>
    <property type="evidence" value="ECO:0000318"/>
    <property type="project" value="GO_Central"/>
</dbReference>
<dbReference type="GO" id="GO:0016829">
    <property type="term" value="F:lyase activity"/>
    <property type="evidence" value="ECO:0007669"/>
    <property type="project" value="UniProtKB-KW"/>
</dbReference>
<dbReference type="GO" id="GO:0000105">
    <property type="term" value="P:L-histidine biosynthetic process"/>
    <property type="evidence" value="ECO:0007669"/>
    <property type="project" value="UniProtKB-UniRule"/>
</dbReference>
<dbReference type="CDD" id="cd04731">
    <property type="entry name" value="HisF"/>
    <property type="match status" value="1"/>
</dbReference>
<dbReference type="FunFam" id="3.20.20.70:FF:000006">
    <property type="entry name" value="Imidazole glycerol phosphate synthase subunit HisF"/>
    <property type="match status" value="1"/>
</dbReference>
<dbReference type="Gene3D" id="3.20.20.70">
    <property type="entry name" value="Aldolase class I"/>
    <property type="match status" value="1"/>
</dbReference>
<dbReference type="HAMAP" id="MF_01013">
    <property type="entry name" value="HisF"/>
    <property type="match status" value="1"/>
</dbReference>
<dbReference type="InterPro" id="IPR013785">
    <property type="entry name" value="Aldolase_TIM"/>
</dbReference>
<dbReference type="InterPro" id="IPR006062">
    <property type="entry name" value="His_biosynth"/>
</dbReference>
<dbReference type="InterPro" id="IPR004651">
    <property type="entry name" value="HisF"/>
</dbReference>
<dbReference type="InterPro" id="IPR050064">
    <property type="entry name" value="IGPS_HisA/HisF"/>
</dbReference>
<dbReference type="InterPro" id="IPR011060">
    <property type="entry name" value="RibuloseP-bd_barrel"/>
</dbReference>
<dbReference type="NCBIfam" id="TIGR00735">
    <property type="entry name" value="hisF"/>
    <property type="match status" value="1"/>
</dbReference>
<dbReference type="PANTHER" id="PTHR21235:SF2">
    <property type="entry name" value="IMIDAZOLE GLYCEROL PHOSPHATE SYNTHASE HISHF"/>
    <property type="match status" value="1"/>
</dbReference>
<dbReference type="PANTHER" id="PTHR21235">
    <property type="entry name" value="IMIDAZOLE GLYCEROL PHOSPHATE SYNTHASE SUBUNIT HISF/H IGP SYNTHASE SUBUNIT HISF/H"/>
    <property type="match status" value="1"/>
</dbReference>
<dbReference type="Pfam" id="PF00977">
    <property type="entry name" value="His_biosynth"/>
    <property type="match status" value="1"/>
</dbReference>
<dbReference type="SUPFAM" id="SSF51366">
    <property type="entry name" value="Ribulose-phoshate binding barrel"/>
    <property type="match status" value="1"/>
</dbReference>
<sequence>MITKRIIPCLDVKEGRVVKGIQFLELKDAGDPVELAEVYDREGADELVFLDISASHEGRKTMVDVVEQVAAKLAIPFTVGGGINQLSDMKTILRAGADKVSVNTAAVLRPELITEGAEFFGSQCIVLAIDAKYDKESDTYKVYTHGGRKKTDWEVTAWAKEGVKRGAGEILLTSMDSDGEKKGFDHTLTKLVSEAVPVPVIASGGAGNAQHMLEAFTKGEADAALAASIFHYKETSIKEVKSYLKEYGVNVR</sequence>
<organism>
    <name type="scientific">Bacillus subtilis (strain 168)</name>
    <dbReference type="NCBI Taxonomy" id="224308"/>
    <lineage>
        <taxon>Bacteria</taxon>
        <taxon>Bacillati</taxon>
        <taxon>Bacillota</taxon>
        <taxon>Bacilli</taxon>
        <taxon>Bacillales</taxon>
        <taxon>Bacillaceae</taxon>
        <taxon>Bacillus</taxon>
    </lineage>
</organism>
<reference key="1">
    <citation type="submission" date="1997-08" db="EMBL/GenBank/DDBJ databases">
        <title>Nucleotide sequence of the 300-304 chromosomal segment of Bacillus subtilis.</title>
        <authorList>
            <person name="Lazarevic V."/>
            <person name="Soldo B."/>
            <person name="Rivolta C."/>
            <person name="Reynolds S."/>
            <person name="Mauel C."/>
            <person name="Karamata D."/>
        </authorList>
    </citation>
    <scope>NUCLEOTIDE SEQUENCE [GENOMIC DNA]</scope>
</reference>
<reference key="2">
    <citation type="journal article" date="1997" name="Nature">
        <title>The complete genome sequence of the Gram-positive bacterium Bacillus subtilis.</title>
        <authorList>
            <person name="Kunst F."/>
            <person name="Ogasawara N."/>
            <person name="Moszer I."/>
            <person name="Albertini A.M."/>
            <person name="Alloni G."/>
            <person name="Azevedo V."/>
            <person name="Bertero M.G."/>
            <person name="Bessieres P."/>
            <person name="Bolotin A."/>
            <person name="Borchert S."/>
            <person name="Borriss R."/>
            <person name="Boursier L."/>
            <person name="Brans A."/>
            <person name="Braun M."/>
            <person name="Brignell S.C."/>
            <person name="Bron S."/>
            <person name="Brouillet S."/>
            <person name="Bruschi C.V."/>
            <person name="Caldwell B."/>
            <person name="Capuano V."/>
            <person name="Carter N.M."/>
            <person name="Choi S.-K."/>
            <person name="Codani J.-J."/>
            <person name="Connerton I.F."/>
            <person name="Cummings N.J."/>
            <person name="Daniel R.A."/>
            <person name="Denizot F."/>
            <person name="Devine K.M."/>
            <person name="Duesterhoeft A."/>
            <person name="Ehrlich S.D."/>
            <person name="Emmerson P.T."/>
            <person name="Entian K.-D."/>
            <person name="Errington J."/>
            <person name="Fabret C."/>
            <person name="Ferrari E."/>
            <person name="Foulger D."/>
            <person name="Fritz C."/>
            <person name="Fujita M."/>
            <person name="Fujita Y."/>
            <person name="Fuma S."/>
            <person name="Galizzi A."/>
            <person name="Galleron N."/>
            <person name="Ghim S.-Y."/>
            <person name="Glaser P."/>
            <person name="Goffeau A."/>
            <person name="Golightly E.J."/>
            <person name="Grandi G."/>
            <person name="Guiseppi G."/>
            <person name="Guy B.J."/>
            <person name="Haga K."/>
            <person name="Haiech J."/>
            <person name="Harwood C.R."/>
            <person name="Henaut A."/>
            <person name="Hilbert H."/>
            <person name="Holsappel S."/>
            <person name="Hosono S."/>
            <person name="Hullo M.-F."/>
            <person name="Itaya M."/>
            <person name="Jones L.-M."/>
            <person name="Joris B."/>
            <person name="Karamata D."/>
            <person name="Kasahara Y."/>
            <person name="Klaerr-Blanchard M."/>
            <person name="Klein C."/>
            <person name="Kobayashi Y."/>
            <person name="Koetter P."/>
            <person name="Koningstein G."/>
            <person name="Krogh S."/>
            <person name="Kumano M."/>
            <person name="Kurita K."/>
            <person name="Lapidus A."/>
            <person name="Lardinois S."/>
            <person name="Lauber J."/>
            <person name="Lazarevic V."/>
            <person name="Lee S.-M."/>
            <person name="Levine A."/>
            <person name="Liu H."/>
            <person name="Masuda S."/>
            <person name="Mauel C."/>
            <person name="Medigue C."/>
            <person name="Medina N."/>
            <person name="Mellado R.P."/>
            <person name="Mizuno M."/>
            <person name="Moestl D."/>
            <person name="Nakai S."/>
            <person name="Noback M."/>
            <person name="Noone D."/>
            <person name="O'Reilly M."/>
            <person name="Ogawa K."/>
            <person name="Ogiwara A."/>
            <person name="Oudega B."/>
            <person name="Park S.-H."/>
            <person name="Parro V."/>
            <person name="Pohl T.M."/>
            <person name="Portetelle D."/>
            <person name="Porwollik S."/>
            <person name="Prescott A.M."/>
            <person name="Presecan E."/>
            <person name="Pujic P."/>
            <person name="Purnelle B."/>
            <person name="Rapoport G."/>
            <person name="Rey M."/>
            <person name="Reynolds S."/>
            <person name="Rieger M."/>
            <person name="Rivolta C."/>
            <person name="Rocha E."/>
            <person name="Roche B."/>
            <person name="Rose M."/>
            <person name="Sadaie Y."/>
            <person name="Sato T."/>
            <person name="Scanlan E."/>
            <person name="Schleich S."/>
            <person name="Schroeter R."/>
            <person name="Scoffone F."/>
            <person name="Sekiguchi J."/>
            <person name="Sekowska A."/>
            <person name="Seror S.J."/>
            <person name="Serror P."/>
            <person name="Shin B.-S."/>
            <person name="Soldo B."/>
            <person name="Sorokin A."/>
            <person name="Tacconi E."/>
            <person name="Takagi T."/>
            <person name="Takahashi H."/>
            <person name="Takemaru K."/>
            <person name="Takeuchi M."/>
            <person name="Tamakoshi A."/>
            <person name="Tanaka T."/>
            <person name="Terpstra P."/>
            <person name="Tognoni A."/>
            <person name="Tosato V."/>
            <person name="Uchiyama S."/>
            <person name="Vandenbol M."/>
            <person name="Vannier F."/>
            <person name="Vassarotti A."/>
            <person name="Viari A."/>
            <person name="Wambutt R."/>
            <person name="Wedler E."/>
            <person name="Wedler H."/>
            <person name="Weitzenegger T."/>
            <person name="Winters P."/>
            <person name="Wipat A."/>
            <person name="Yamamoto H."/>
            <person name="Yamane K."/>
            <person name="Yasumoto K."/>
            <person name="Yata K."/>
            <person name="Yoshida K."/>
            <person name="Yoshikawa H.-F."/>
            <person name="Zumstein E."/>
            <person name="Yoshikawa H."/>
            <person name="Danchin A."/>
        </authorList>
    </citation>
    <scope>NUCLEOTIDE SEQUENCE [LARGE SCALE GENOMIC DNA]</scope>
    <source>
        <strain>168</strain>
    </source>
</reference>
<gene>
    <name type="primary">hisF</name>
    <name type="ordered locus">BSU34870</name>
</gene>